<feature type="chain" id="PRO_0000318438" description="Protein translocase subunit SecA 2">
    <location>
        <begin position="1"/>
        <end position="795"/>
    </location>
</feature>
<feature type="binding site" evidence="1">
    <location>
        <position position="84"/>
    </location>
    <ligand>
        <name>ATP</name>
        <dbReference type="ChEBI" id="CHEBI:30616"/>
    </ligand>
</feature>
<feature type="binding site" evidence="1">
    <location>
        <begin position="102"/>
        <end position="106"/>
    </location>
    <ligand>
        <name>ATP</name>
        <dbReference type="ChEBI" id="CHEBI:30616"/>
    </ligand>
</feature>
<feature type="binding site" evidence="1">
    <location>
        <position position="496"/>
    </location>
    <ligand>
        <name>ATP</name>
        <dbReference type="ChEBI" id="CHEBI:30616"/>
    </ligand>
</feature>
<dbReference type="EC" id="7.4.2.8" evidence="1"/>
<dbReference type="EMBL" id="AL766851">
    <property type="protein sequence ID" value="CAD47177.1"/>
    <property type="molecule type" value="Genomic_DNA"/>
</dbReference>
<dbReference type="RefSeq" id="WP_000123604.1">
    <property type="nucleotide sequence ID" value="NC_004368.1"/>
</dbReference>
<dbReference type="SMR" id="Q8E484"/>
<dbReference type="KEGG" id="san:gbs1518"/>
<dbReference type="eggNOG" id="COG0653">
    <property type="taxonomic scope" value="Bacteria"/>
</dbReference>
<dbReference type="HOGENOM" id="CLU_005314_3_2_9"/>
<dbReference type="Proteomes" id="UP000000823">
    <property type="component" value="Chromosome"/>
</dbReference>
<dbReference type="GO" id="GO:0031522">
    <property type="term" value="C:cell envelope Sec protein transport complex"/>
    <property type="evidence" value="ECO:0007669"/>
    <property type="project" value="TreeGrafter"/>
</dbReference>
<dbReference type="GO" id="GO:0005829">
    <property type="term" value="C:cytosol"/>
    <property type="evidence" value="ECO:0007669"/>
    <property type="project" value="TreeGrafter"/>
</dbReference>
<dbReference type="GO" id="GO:0005886">
    <property type="term" value="C:plasma membrane"/>
    <property type="evidence" value="ECO:0007669"/>
    <property type="project" value="UniProtKB-SubCell"/>
</dbReference>
<dbReference type="GO" id="GO:0005524">
    <property type="term" value="F:ATP binding"/>
    <property type="evidence" value="ECO:0007669"/>
    <property type="project" value="UniProtKB-UniRule"/>
</dbReference>
<dbReference type="GO" id="GO:0008564">
    <property type="term" value="F:protein-exporting ATPase activity"/>
    <property type="evidence" value="ECO:0007669"/>
    <property type="project" value="UniProtKB-EC"/>
</dbReference>
<dbReference type="GO" id="GO:0065002">
    <property type="term" value="P:intracellular protein transmembrane transport"/>
    <property type="evidence" value="ECO:0007669"/>
    <property type="project" value="UniProtKB-UniRule"/>
</dbReference>
<dbReference type="GO" id="GO:0017038">
    <property type="term" value="P:protein import"/>
    <property type="evidence" value="ECO:0007669"/>
    <property type="project" value="InterPro"/>
</dbReference>
<dbReference type="GO" id="GO:0006605">
    <property type="term" value="P:protein targeting"/>
    <property type="evidence" value="ECO:0007669"/>
    <property type="project" value="UniProtKB-UniRule"/>
</dbReference>
<dbReference type="GO" id="GO:0043952">
    <property type="term" value="P:protein transport by the Sec complex"/>
    <property type="evidence" value="ECO:0007669"/>
    <property type="project" value="TreeGrafter"/>
</dbReference>
<dbReference type="CDD" id="cd17928">
    <property type="entry name" value="DEXDc_SecA"/>
    <property type="match status" value="1"/>
</dbReference>
<dbReference type="CDD" id="cd18803">
    <property type="entry name" value="SF2_C_secA"/>
    <property type="match status" value="1"/>
</dbReference>
<dbReference type="FunFam" id="3.40.50.300:FF:000429">
    <property type="entry name" value="Preprotein translocase subunit SecA"/>
    <property type="match status" value="1"/>
</dbReference>
<dbReference type="Gene3D" id="1.10.3060.10">
    <property type="entry name" value="Helical scaffold and wing domains of SecA"/>
    <property type="match status" value="1"/>
</dbReference>
<dbReference type="Gene3D" id="3.40.50.300">
    <property type="entry name" value="P-loop containing nucleotide triphosphate hydrolases"/>
    <property type="match status" value="2"/>
</dbReference>
<dbReference type="Gene3D" id="3.90.1440.10">
    <property type="entry name" value="SecA, preprotein cross-linking domain"/>
    <property type="match status" value="1"/>
</dbReference>
<dbReference type="HAMAP" id="MF_01382">
    <property type="entry name" value="SecA"/>
    <property type="match status" value="1"/>
</dbReference>
<dbReference type="InterPro" id="IPR014001">
    <property type="entry name" value="Helicase_ATP-bd"/>
</dbReference>
<dbReference type="InterPro" id="IPR001650">
    <property type="entry name" value="Helicase_C-like"/>
</dbReference>
<dbReference type="InterPro" id="IPR027417">
    <property type="entry name" value="P-loop_NTPase"/>
</dbReference>
<dbReference type="InterPro" id="IPR000185">
    <property type="entry name" value="SecA"/>
</dbReference>
<dbReference type="InterPro" id="IPR022490">
    <property type="entry name" value="SecA2"/>
</dbReference>
<dbReference type="InterPro" id="IPR020937">
    <property type="entry name" value="SecA_CS"/>
</dbReference>
<dbReference type="InterPro" id="IPR011115">
    <property type="entry name" value="SecA_DEAD"/>
</dbReference>
<dbReference type="InterPro" id="IPR014018">
    <property type="entry name" value="SecA_motor_DEAD"/>
</dbReference>
<dbReference type="InterPro" id="IPR011130">
    <property type="entry name" value="SecA_preprotein_X-link_dom"/>
</dbReference>
<dbReference type="InterPro" id="IPR044722">
    <property type="entry name" value="SecA_SF2_C"/>
</dbReference>
<dbReference type="InterPro" id="IPR011116">
    <property type="entry name" value="SecA_Wing/Scaffold"/>
</dbReference>
<dbReference type="InterPro" id="IPR036266">
    <property type="entry name" value="SecA_Wing/Scaffold_sf"/>
</dbReference>
<dbReference type="InterPro" id="IPR036670">
    <property type="entry name" value="SecA_X-link_sf"/>
</dbReference>
<dbReference type="NCBIfam" id="NF006630">
    <property type="entry name" value="PRK09200.1"/>
    <property type="match status" value="1"/>
</dbReference>
<dbReference type="NCBIfam" id="TIGR03714">
    <property type="entry name" value="secA2"/>
    <property type="match status" value="1"/>
</dbReference>
<dbReference type="PANTHER" id="PTHR30612:SF0">
    <property type="entry name" value="CHLOROPLAST PROTEIN-TRANSPORTING ATPASE"/>
    <property type="match status" value="1"/>
</dbReference>
<dbReference type="PANTHER" id="PTHR30612">
    <property type="entry name" value="SECA INNER MEMBRANE COMPONENT OF SEC PROTEIN SECRETION SYSTEM"/>
    <property type="match status" value="1"/>
</dbReference>
<dbReference type="Pfam" id="PF21090">
    <property type="entry name" value="P-loop_SecA"/>
    <property type="match status" value="2"/>
</dbReference>
<dbReference type="Pfam" id="PF07517">
    <property type="entry name" value="SecA_DEAD"/>
    <property type="match status" value="1"/>
</dbReference>
<dbReference type="Pfam" id="PF01043">
    <property type="entry name" value="SecA_PP_bind"/>
    <property type="match status" value="1"/>
</dbReference>
<dbReference type="Pfam" id="PF07516">
    <property type="entry name" value="SecA_SW"/>
    <property type="match status" value="1"/>
</dbReference>
<dbReference type="PRINTS" id="PR00906">
    <property type="entry name" value="SECA"/>
</dbReference>
<dbReference type="SMART" id="SM00957">
    <property type="entry name" value="SecA_DEAD"/>
    <property type="match status" value="1"/>
</dbReference>
<dbReference type="SMART" id="SM00958">
    <property type="entry name" value="SecA_PP_bind"/>
    <property type="match status" value="1"/>
</dbReference>
<dbReference type="SUPFAM" id="SSF81886">
    <property type="entry name" value="Helical scaffold and wing domains of SecA"/>
    <property type="match status" value="1"/>
</dbReference>
<dbReference type="SUPFAM" id="SSF52540">
    <property type="entry name" value="P-loop containing nucleoside triphosphate hydrolases"/>
    <property type="match status" value="2"/>
</dbReference>
<dbReference type="SUPFAM" id="SSF81767">
    <property type="entry name" value="Pre-protein crosslinking domain of SecA"/>
    <property type="match status" value="1"/>
</dbReference>
<dbReference type="PROSITE" id="PS01312">
    <property type="entry name" value="SECA"/>
    <property type="match status" value="1"/>
</dbReference>
<dbReference type="PROSITE" id="PS51196">
    <property type="entry name" value="SECA_MOTOR_DEAD"/>
    <property type="match status" value="1"/>
</dbReference>
<proteinExistence type="inferred from homology"/>
<organism>
    <name type="scientific">Streptococcus agalactiae serotype III (strain NEM316)</name>
    <dbReference type="NCBI Taxonomy" id="211110"/>
    <lineage>
        <taxon>Bacteria</taxon>
        <taxon>Bacillati</taxon>
        <taxon>Bacillota</taxon>
        <taxon>Bacilli</taxon>
        <taxon>Lactobacillales</taxon>
        <taxon>Streptococcaceae</taxon>
        <taxon>Streptococcus</taxon>
    </lineage>
</organism>
<reference key="1">
    <citation type="journal article" date="2002" name="Mol. Microbiol.">
        <title>Genome sequence of Streptococcus agalactiae, a pathogen causing invasive neonatal disease.</title>
        <authorList>
            <person name="Glaser P."/>
            <person name="Rusniok C."/>
            <person name="Buchrieser C."/>
            <person name="Chevalier F."/>
            <person name="Frangeul L."/>
            <person name="Msadek T."/>
            <person name="Zouine M."/>
            <person name="Couve E."/>
            <person name="Lalioui L."/>
            <person name="Poyart C."/>
            <person name="Trieu-Cuot P."/>
            <person name="Kunst F."/>
        </authorList>
    </citation>
    <scope>NUCLEOTIDE SEQUENCE [LARGE SCALE GENOMIC DNA]</scope>
    <source>
        <strain>NEM316</strain>
    </source>
</reference>
<accession>Q8E484</accession>
<evidence type="ECO:0000255" key="1">
    <source>
        <dbReference type="HAMAP-Rule" id="MF_01382"/>
    </source>
</evidence>
<protein>
    <recommendedName>
        <fullName evidence="1">Protein translocase subunit SecA 2</fullName>
        <ecNumber evidence="1">7.4.2.8</ecNumber>
    </recommendedName>
</protein>
<gene>
    <name evidence="1" type="primary">secA2</name>
    <name type="ordered locus">gbs1518</name>
</gene>
<name>SECA2_STRA3</name>
<comment type="function">
    <text evidence="1">Part of the Sec protein translocase complex. Interacts with the SecYEG preprotein conducting channel. Has a central role in coupling the hydrolysis of ATP to the transfer of proteins into and across the cell membrane, serving as an ATP-driven molecular motor driving the stepwise translocation of polypeptide chains across the membrane.</text>
</comment>
<comment type="catalytic activity">
    <reaction evidence="1">
        <text>ATP + H2O + cellular proteinSide 1 = ADP + phosphate + cellular proteinSide 2.</text>
        <dbReference type="EC" id="7.4.2.8"/>
    </reaction>
</comment>
<comment type="subunit">
    <text evidence="1">Monomer and homodimer. Part of the essential Sec protein translocation apparatus which comprises SecA, SecYEG and auxiliary proteins SecDF. Other proteins may also be involved.</text>
</comment>
<comment type="subcellular location">
    <subcellularLocation>
        <location evidence="1">Cell membrane</location>
        <topology evidence="1">Peripheral membrane protein</topology>
        <orientation evidence="1">Cytoplasmic side</orientation>
    </subcellularLocation>
    <subcellularLocation>
        <location evidence="1">Cytoplasm</location>
    </subcellularLocation>
    <text evidence="1">Distribution is 50-50.</text>
</comment>
<comment type="similarity">
    <text evidence="1">Belongs to the SecA family.</text>
</comment>
<sequence>MTAFNSLFSLDKKRLKKLQRTLNTINSLKGQMATLSNEELQAKTTEFRKRLVNGETLDDICAEAFAVVREADKRVLGLFPYDVQVIGGLVLHQGNTAEMKTGEGKTLTATMPLYLNALEGKGAMLLTNNSYLAIRDAEEMGKVYRFLGLSVGVGVSDNEEEDRDAATKRAVYSSDIVYSTSSALGFDYLIDNLASSKSQKYMPKLHYAIVDEADAVLLDMAQTPLVISGSPRVQSNLYKIADELILSFEEQVDYYFDKERQEVWIKNQGVREAERYFRIPHFYKQSNRELVRHLNLSLKAHKLFERGKDYVVDDGEIKLLDATNGRVLEGTKLQGGVHQAIEQKEHLNVTPESRAMASITYQNLFRMFTKLAGMTGTGKTAEKEFIEVYDMEVVRIPTNSPVRRIDYPDKIYTTLPEKIHATIEFVKQVHDTGQPILLVAGSVRMSELFSELLLLSGIPHSLLNAQSAVKEAQMIAEAGQKGAVTVATNMAGRGTDIKLGKGVSELGGLAVIGTERMKSQRMDLQLRGRSGRQGDIGFSQFFVSFEDDLMIESGPKWAQDYFRKNRDKVNPEKPKALGQRRFQKLFQQTQEASDGKGESARSQTIEFDSSVQLQREYVYRERNALINGESGHFSPRQIIDTVISSFIAYLDGEVEKEELIFEVNRFIFDNMSYNLQGISKEMSLEEIKNYLFKIADEILREKHNLLGDSFGDFERTAALKAIDEAWIEEVDYLQQLRTVATARQTAQRNPVFEYHKEAYKSYNIMKKEIREQTFRNLLLSEVSFNENGDLQIYFI</sequence>
<keyword id="KW-0067">ATP-binding</keyword>
<keyword id="KW-1003">Cell membrane</keyword>
<keyword id="KW-0963">Cytoplasm</keyword>
<keyword id="KW-0472">Membrane</keyword>
<keyword id="KW-0547">Nucleotide-binding</keyword>
<keyword id="KW-0653">Protein transport</keyword>
<keyword id="KW-1278">Translocase</keyword>
<keyword id="KW-0811">Translocation</keyword>
<keyword id="KW-0813">Transport</keyword>